<evidence type="ECO:0000255" key="1"/>
<evidence type="ECO:0000269" key="2">
    <source>
    </source>
</evidence>
<evidence type="ECO:0000269" key="3">
    <source>
    </source>
</evidence>
<evidence type="ECO:0000269" key="4">
    <source>
    </source>
</evidence>
<evidence type="ECO:0000269" key="5">
    <source>
    </source>
</evidence>
<evidence type="ECO:0000269" key="6">
    <source>
    </source>
</evidence>
<evidence type="ECO:0000269" key="7">
    <source>
    </source>
</evidence>
<evidence type="ECO:0000269" key="8">
    <source>
    </source>
</evidence>
<evidence type="ECO:0000269" key="9">
    <source>
    </source>
</evidence>
<evidence type="ECO:0000269" key="10">
    <source>
    </source>
</evidence>
<evidence type="ECO:0000269" key="11">
    <source>
    </source>
</evidence>
<evidence type="ECO:0000269" key="12">
    <source>
    </source>
</evidence>
<evidence type="ECO:0000269" key="13">
    <source ref="18"/>
</evidence>
<evidence type="ECO:0000269" key="14">
    <source ref="5"/>
</evidence>
<evidence type="ECO:0000303" key="15">
    <source>
    </source>
</evidence>
<evidence type="ECO:0000303" key="16">
    <source>
    </source>
</evidence>
<evidence type="ECO:0000303" key="17">
    <source>
    </source>
</evidence>
<evidence type="ECO:0000303" key="18">
    <source>
    </source>
</evidence>
<evidence type="ECO:0000303" key="19">
    <source>
    </source>
</evidence>
<evidence type="ECO:0000303" key="20">
    <source>
    </source>
</evidence>
<evidence type="ECO:0000303" key="21">
    <source>
    </source>
</evidence>
<evidence type="ECO:0000303" key="22">
    <source>
    </source>
</evidence>
<evidence type="ECO:0000303" key="23">
    <source>
    </source>
</evidence>
<evidence type="ECO:0000303" key="24">
    <source>
    </source>
</evidence>
<evidence type="ECO:0000303" key="25">
    <source>
    </source>
</evidence>
<evidence type="ECO:0000303" key="26">
    <source>
    </source>
</evidence>
<evidence type="ECO:0000305" key="27"/>
<evidence type="ECO:0000305" key="28">
    <source>
    </source>
</evidence>
<evidence type="ECO:0000305" key="29">
    <source>
    </source>
</evidence>
<evidence type="ECO:0000312" key="30">
    <source>
        <dbReference type="PDB" id="1LU8"/>
    </source>
</evidence>
<evidence type="ECO:0000312" key="31">
    <source>
        <dbReference type="PDB" id="1TYK"/>
    </source>
</evidence>
<evidence type="ECO:0007829" key="32">
    <source>
        <dbReference type="PDB" id="1LU8"/>
    </source>
</evidence>
<evidence type="ECO:0007829" key="33">
    <source>
        <dbReference type="PDB" id="1TYK"/>
    </source>
</evidence>
<accession>Q7YT39</accession>
<accession>Q7M3T1</accession>
<feature type="signal peptide" evidence="1">
    <location>
        <begin position="1"/>
        <end position="21"/>
    </location>
</feature>
<feature type="propeptide" id="PRO_0000035575" evidence="2 4 11 14">
    <location>
        <begin position="22"/>
        <end position="46"/>
    </location>
</feature>
<feature type="chain" id="PRO_0000035576" description="M-theraphotoxin-Gr1a" evidence="2 4 11 14">
    <location>
        <begin position="47"/>
        <end position="80"/>
    </location>
</feature>
<feature type="modified residue" description="Phenylalanine amide" evidence="4 11 29">
    <location>
        <position position="80"/>
    </location>
</feature>
<feature type="disulfide bond" evidence="4 13 30 31">
    <location>
        <begin position="48"/>
        <end position="63"/>
    </location>
</feature>
<feature type="disulfide bond" evidence="4 13 30 31">
    <location>
        <begin position="55"/>
        <end position="69"/>
    </location>
</feature>
<feature type="disulfide bond" evidence="4 13 30 31">
    <location>
        <begin position="62"/>
        <end position="76"/>
    </location>
</feature>
<feature type="sequence conflict" description="In Ref. 3; AA sequence and 5; AA sequence." evidence="27" ref="3 5">
    <original>F</original>
    <variation>S</variation>
    <location>
        <position position="80"/>
    </location>
</feature>
<feature type="strand" evidence="33">
    <location>
        <begin position="51"/>
        <end position="54"/>
    </location>
</feature>
<feature type="turn" evidence="32">
    <location>
        <begin position="57"/>
        <end position="59"/>
    </location>
</feature>
<feature type="strand" evidence="32">
    <location>
        <begin position="64"/>
        <end position="70"/>
    </location>
</feature>
<feature type="turn" evidence="32">
    <location>
        <begin position="71"/>
        <end position="74"/>
    </location>
</feature>
<feature type="strand" evidence="32">
    <location>
        <begin position="75"/>
        <end position="78"/>
    </location>
</feature>
<protein>
    <recommendedName>
        <fullName evidence="27">M-theraphotoxin-Gr1a</fullName>
        <shortName evidence="27">M-TRTX-Gr1a</shortName>
    </recommendedName>
    <alternativeName>
        <fullName evidence="15 16 17 21">GsMTx-4</fullName>
        <shortName evidence="18 19 20 22 23 24 25">GsMTx4</shortName>
        <shortName>MTx4</shortName>
    </alternativeName>
    <alternativeName>
        <fullName evidence="26">GsMTx-IV</fullName>
    </alternativeName>
</protein>
<organism>
    <name type="scientific">Grammostola rosea</name>
    <name type="common">Chilean rose tarantula</name>
    <name type="synonym">Grammostola spatulata</name>
    <dbReference type="NCBI Taxonomy" id="432528"/>
    <lineage>
        <taxon>Eukaryota</taxon>
        <taxon>Metazoa</taxon>
        <taxon>Ecdysozoa</taxon>
        <taxon>Arthropoda</taxon>
        <taxon>Chelicerata</taxon>
        <taxon>Arachnida</taxon>
        <taxon>Araneae</taxon>
        <taxon>Mygalomorphae</taxon>
        <taxon>Theraphosidae</taxon>
        <taxon>Grammostola</taxon>
    </lineage>
</organism>
<proteinExistence type="evidence at protein level"/>
<dbReference type="EMBL" id="AY316118">
    <property type="protein sequence ID" value="AAP79435.1"/>
    <property type="molecule type" value="mRNA"/>
</dbReference>
<dbReference type="PIR" id="A59371">
    <property type="entry name" value="A59371"/>
</dbReference>
<dbReference type="PDB" id="1LU8">
    <property type="method" value="NMR"/>
    <property type="chains" value="A=47-80"/>
</dbReference>
<dbReference type="PDB" id="1TYK">
    <property type="method" value="NMR"/>
    <property type="chains" value="A=47-80"/>
</dbReference>
<dbReference type="PDBsum" id="1LU8"/>
<dbReference type="PDBsum" id="1TYK"/>
<dbReference type="SMR" id="Q7YT39"/>
<dbReference type="TCDB" id="8.B.3.1.9">
    <property type="family name" value="the huwentoxin-1 (huwentoxin-1) family"/>
</dbReference>
<dbReference type="ArachnoServer" id="AS000068">
    <property type="toxin name" value="M-theraphotoxin-Gr1a"/>
</dbReference>
<dbReference type="EvolutionaryTrace" id="Q7YT39"/>
<dbReference type="GO" id="GO:0005576">
    <property type="term" value="C:extracellular region"/>
    <property type="evidence" value="ECO:0007669"/>
    <property type="project" value="UniProtKB-SubCell"/>
</dbReference>
<dbReference type="GO" id="GO:0008200">
    <property type="term" value="F:ion channel inhibitor activity"/>
    <property type="evidence" value="ECO:0007669"/>
    <property type="project" value="InterPro"/>
</dbReference>
<dbReference type="GO" id="GO:0008289">
    <property type="term" value="F:lipid binding"/>
    <property type="evidence" value="ECO:0007669"/>
    <property type="project" value="UniProtKB-KW"/>
</dbReference>
<dbReference type="GO" id="GO:0015459">
    <property type="term" value="F:potassium channel regulator activity"/>
    <property type="evidence" value="ECO:0007669"/>
    <property type="project" value="UniProtKB-KW"/>
</dbReference>
<dbReference type="GO" id="GO:0017080">
    <property type="term" value="F:sodium channel regulator activity"/>
    <property type="evidence" value="ECO:0007669"/>
    <property type="project" value="UniProtKB-KW"/>
</dbReference>
<dbReference type="GO" id="GO:0090729">
    <property type="term" value="F:toxin activity"/>
    <property type="evidence" value="ECO:0007669"/>
    <property type="project" value="UniProtKB-KW"/>
</dbReference>
<dbReference type="GO" id="GO:0042742">
    <property type="term" value="P:defense response to bacterium"/>
    <property type="evidence" value="ECO:0007669"/>
    <property type="project" value="UniProtKB-KW"/>
</dbReference>
<dbReference type="InterPro" id="IPR011696">
    <property type="entry name" value="Huwentoxin-1"/>
</dbReference>
<dbReference type="Pfam" id="PF07740">
    <property type="entry name" value="Toxin_12"/>
    <property type="match status" value="1"/>
</dbReference>
<dbReference type="SUPFAM" id="SSF57059">
    <property type="entry name" value="omega toxin-like"/>
    <property type="match status" value="1"/>
</dbReference>
<reference key="1">
    <citation type="journal article" date="2003" name="Toxicon">
        <title>cDNA sequence and in vitro folding of GsMTx4, a specific peptide inhibitor of mechanosensitive channels.</title>
        <authorList>
            <person name="Ostrow K.L."/>
            <person name="Mammoser A."/>
            <person name="Suchyna T.M."/>
            <person name="Sachs F."/>
            <person name="Oswald R.E."/>
            <person name="Kubo S."/>
            <person name="Chino N."/>
            <person name="Gottlieb P.A."/>
        </authorList>
    </citation>
    <scope>NUCLEOTIDE SEQUENCE [MRNA]</scope>
    <scope>SYNTHESIS OF 47-80</scope>
    <source>
        <tissue>Venom gland</tissue>
    </source>
</reference>
<reference key="2">
    <citation type="journal article" date="2011" name="Toxicon">
        <title>Characterization of voltage-dependent calcium channel blocking peptides from the venom of the tarantula Grammostola rosea.</title>
        <authorList>
            <person name="Ono S."/>
            <person name="Kimura T."/>
            <person name="Kubo T."/>
        </authorList>
    </citation>
    <scope>NUCLEOTIDE SEQUENCE [MRNA]</scope>
    <source>
        <tissue>Venom gland</tissue>
    </source>
</reference>
<reference key="3">
    <citation type="journal article" date="2000" name="J. Gen. Physiol.">
        <title>Identification of a peptide toxin from Grammostola spatulata spider venom that blocks cation-selective stretch-activated channels.</title>
        <authorList>
            <person name="Suchyna T.M."/>
            <person name="Johnson J.H."/>
            <person name="Hamer K."/>
            <person name="Leykam J.F."/>
            <person name="Gage D.A."/>
            <person name="Clemo H.F."/>
            <person name="Baumgarten C.M."/>
            <person name="Sachs F."/>
        </authorList>
    </citation>
    <scope>PROTEIN SEQUENCE OF 47-81</scope>
    <scope>FUNCTION</scope>
    <scope>MASS SPECTROMETRY</scope>
    <scope>SUBCELLULAR LOCATION</scope>
    <source>
        <tissue>Venom</tissue>
    </source>
</reference>
<reference key="4">
    <citation type="journal article" date="2001" name="J. Gen. Physiol.">
        <authorList>
            <person name="Suchyna T.M."/>
            <person name="Johnson J.H."/>
            <person name="Hamer K."/>
            <person name="Leykam J.F."/>
            <person name="Gage D.A."/>
            <person name="Clemo H.F."/>
            <person name="Baumgarten C.M."/>
            <person name="Sachs F."/>
        </authorList>
    </citation>
    <scope>ERRATUM OF PUBMED:10779316</scope>
    <scope>SEQUENCE REVISION</scope>
</reference>
<reference key="5">
    <citation type="patent" date="2002-06-20" number="US0077286">
        <title>Mechanically activated channel blocker.</title>
        <authorList>
            <person name="Sachs F."/>
            <person name="Johnson J.H."/>
            <person name="Suchyna T.M."/>
        </authorList>
    </citation>
    <scope>PROTEIN SEQUENCE OF 47-81</scope>
    <source>
        <tissue>Venom</tissue>
    </source>
</reference>
<reference key="6">
    <citation type="journal article" date="2002" name="J. Biol. Chem.">
        <title>Solution structure of peptide toxins that block mechanosensitive ion channels.</title>
        <authorList>
            <person name="Oswald R.E."/>
            <person name="Suchyna T.M."/>
            <person name="McFeeters R."/>
            <person name="Gottlieb P.A."/>
            <person name="Sachs F."/>
        </authorList>
    </citation>
    <scope>PROTEIN SEQUENCE OF 47-80</scope>
    <scope>STRUCTURE BY NMR OF 47-80</scope>
    <scope>DISULFIDE BONDS</scope>
    <scope>AMIDATION AT PHE-80</scope>
    <scope>SEQUENCE REVISION IN PROOF</scope>
    <scope>MASS SPECTROMETRY</scope>
</reference>
<reference key="7">
    <citation type="journal article" date="2010" name="J. Biol. Chem.">
        <title>Target promiscuity and heterogeneous effects of tarantula venom peptides affecting Na+ and K+ ion channels.</title>
        <authorList>
            <person name="Redaelli E."/>
            <person name="Cassulini R.R."/>
            <person name="Silva D.F."/>
            <person name="Clement H."/>
            <person name="Schiavon E."/>
            <person name="Zamudio F.Z."/>
            <person name="Odell G."/>
            <person name="Arcangeli A."/>
            <person name="Clare J.J."/>
            <person name="Alagon A."/>
            <person name="de la Vega R.C."/>
            <person name="Possani L.D."/>
            <person name="Wanke E."/>
        </authorList>
    </citation>
    <scope>PROTEIN SEQUENCE OF 47-80</scope>
    <scope>FUNCTION</scope>
    <scope>AMIDATION AT PHE-80</scope>
    <scope>IDENTIFICATION BY MASS SPECTROMETRY</scope>
</reference>
<reference key="8">
    <citation type="journal article" date="2010" name="J. Biol. Chem.">
        <authorList>
            <person name="Redaelli E."/>
            <person name="Cassulini R.R."/>
            <person name="Silva D.F."/>
            <person name="Clement H."/>
            <person name="Schiavon E."/>
            <person name="Zamudio F.Z."/>
            <person name="Odell G."/>
            <person name="Arcangeli A."/>
            <person name="Clare J.J."/>
            <person name="Alagon A."/>
            <person name="de la Vega R.C."/>
            <person name="Possani L.D."/>
            <person name="Wanke E."/>
        </authorList>
    </citation>
    <scope>ERRATUM OF PUBMED:19955179</scope>
    <scope>SEQUENCE REVISION</scope>
</reference>
<reference key="9">
    <citation type="journal article" date="2001" name="Nature">
        <title>Tarantula peptide inhibits atrial fibrillation.</title>
        <authorList>
            <person name="Bode F."/>
            <person name="Sachs F."/>
            <person name="Franz M.R."/>
        </authorList>
    </citation>
    <scope>FUNCTION</scope>
</reference>
<reference key="10">
    <citation type="journal article" date="2004" name="Biochemistry">
        <title>Localization of the voltage-sensor toxin receptor on KvAP.</title>
        <authorList>
            <person name="Ruta V."/>
            <person name="MacKinnon R."/>
        </authorList>
    </citation>
    <scope>FUNCTION</scope>
    <source>
        <tissue>Venom</tissue>
    </source>
</reference>
<reference key="11">
    <citation type="journal article" date="2004" name="Nature">
        <title>Bilayer-dependent inhibition of mechanosensitive channels by neuroactive peptide enantiomers.</title>
        <authorList>
            <person name="Suchyna T.M."/>
            <person name="Tape S.E."/>
            <person name="Koeppe R.E. II"/>
            <person name="Andersen O.S."/>
            <person name="Sachs F."/>
            <person name="Gottlieb P.A."/>
        </authorList>
    </citation>
    <scope>FUNCTION</scope>
    <scope>MEMBRANE-PARTITIONING</scope>
    <scope>D-GSMTX4 SYNTHESIS</scope>
</reference>
<reference key="12">
    <citation type="journal article" date="2006" name="Biochem. Biophys. Res. Commun.">
        <title>Lipid membrane interaction and antimicrobial activity of GsMTx-4, an inhibitor of mechanosensitive channel.</title>
        <authorList>
            <person name="Jung H.J."/>
            <person name="Kim P.I."/>
            <person name="Lee S.K."/>
            <person name="Lee C.W."/>
            <person name="Eu Y.J."/>
            <person name="Lee D.G."/>
            <person name="Earm Y.E."/>
            <person name="Kim J.I."/>
        </authorList>
    </citation>
    <scope>FUNCTION</scope>
</reference>
<reference key="13">
    <citation type="journal article" date="2006" name="Neurosci. Lett.">
        <title>Effects of tarantula toxin GsMTx4 on the membrane motor of outer hair cells.</title>
        <authorList>
            <person name="Fang J."/>
            <person name="Iwasa K.H."/>
        </authorList>
    </citation>
    <scope>FUNCTION ON THE MEMBRANE MOTOR OF OUTER HAIR CELLS</scope>
</reference>
<reference key="14">
    <citation type="journal article" date="2007" name="Biophys. J.">
        <title>Molecular dynamics simulations of a stretch-activated channel inhibitor GsMTx4 with lipid membranes: two binding modes and effects of lipid structure.</title>
        <authorList>
            <person name="Nishizawa M."/>
            <person name="Nishizawa K."/>
        </authorList>
    </citation>
    <scope>FUNCTION</scope>
</reference>
<reference key="15">
    <citation type="journal article" date="2007" name="Biophys. J.">
        <title>Is lipid bilayer binding a common property of inhibitor cysteine knot ion-channel blockers?</title>
        <authorList>
            <person name="Posokhov Y.O."/>
            <person name="Gottlieb P.A."/>
            <person name="Morales M.J."/>
            <person name="Sachs F."/>
            <person name="Ladokhin A.S."/>
        </authorList>
    </citation>
    <scope>FUNCTION</scope>
</reference>
<reference key="16">
    <citation type="journal article" date="2018" name="J. Biol. Chem.">
        <title>Gating modifier toxins isolated from spider venom: modulation of voltage-gated sodium channels and the role of lipid membranes.</title>
        <authorList>
            <person name="Agwa A.J."/>
            <person name="Peigneur S."/>
            <person name="Chow C.Y."/>
            <person name="Lawrence N."/>
            <person name="Craik D.J."/>
            <person name="Tytgat J."/>
            <person name="King G.F."/>
            <person name="Henriques S.T."/>
            <person name="Schroeder C.I."/>
        </authorList>
    </citation>
    <scope>FUNCTION</scope>
    <scope>SYNTHESIS</scope>
</reference>
<reference key="17">
    <citation type="journal article" date="2021" name="Channels">
        <title>Fast desensitization of acetylcholine receptors induced by a spider toxin.</title>
        <authorList>
            <person name="Pan N.C."/>
            <person name="Zhang T."/>
            <person name="Hu S."/>
            <person name="Liu C."/>
            <person name="Wang Y."/>
        </authorList>
    </citation>
    <scope>FUNCTION ON ACHR</scope>
    <scope>SYNTHESIS OF 47-80</scope>
</reference>
<reference key="18">
    <citation type="submission" date="2002-05" db="PDB data bank">
        <title>Solution structure of GsMTx-4, a peptide blocker of cation-selective stretch-activated channels.</title>
        <authorList>
            <person name="Jung H.J."/>
            <person name="Lee C.W."/>
            <person name="Earm Y.E."/>
            <person name="Kim J.I."/>
        </authorList>
    </citation>
    <scope>STRUCTURE BY NMR OF 47-80</scope>
    <scope>DISULFIDE BONDS</scope>
</reference>
<sequence length="82" mass="9400">MKTSVVFVIAGLALLSVVCYASELKEQSSVNEVLSTIFHFEQPEERGCLEFWWKCNPNDDKCCRPKLKCSKLFKLCNFSFGK</sequence>
<name>MTX4_GRARO</name>
<keyword id="KW-0002">3D-structure</keyword>
<keyword id="KW-0027">Amidation</keyword>
<keyword id="KW-0044">Antibiotic</keyword>
<keyword id="KW-0929">Antimicrobial</keyword>
<keyword id="KW-0903">Direct protein sequencing</keyword>
<keyword id="KW-1015">Disulfide bond</keyword>
<keyword id="KW-0872">Ion channel impairing toxin</keyword>
<keyword id="KW-0960">Knottin</keyword>
<keyword id="KW-0446">Lipid-binding</keyword>
<keyword id="KW-0528">Neurotoxin</keyword>
<keyword id="KW-0632">Potassium channel impairing toxin</keyword>
<keyword id="KW-0964">Secreted</keyword>
<keyword id="KW-0732">Signal</keyword>
<keyword id="KW-0800">Toxin</keyword>
<keyword id="KW-1220">Voltage-gated potassium channel impairing toxin</keyword>
<keyword id="KW-0738">Voltage-gated sodium channel impairing toxin</keyword>
<comment type="function">
    <text evidence="2 3 5 6 7 8 9 10 11 12">This cationic hydrophobic peptide acts on a lot of different channels and has an antimicrobial activity. It blocks mechanosensitive ion channels (also named stretch-activated channels or SACs), without having effect on whole-cell voltage-sensitive currents. It also affects acetylcholine receptors (nAChRs) through interactions with membrane lipids by prolonging the closing time without affecting channel conductance or opening activity (PubMed:34374321). It shows high affinity for lipid bilayers (PubMed:15241420, PubMed:29703751). It acts by partitioning into the membrane and perturbing the interface between the channel and the lipid bilayer without necessarily being in physical contact with the channel. It inhibits atrial fibrillation as well as the membrane motor of outer hair cells at low doses. It also binds to the voltage sensor of voltage-gated potassium channels from the archaebacterium Aeropyrum pernix (KvAP) without affecting channel gating. It also shows a low inhibition on a large spectra of sodium channels (Nav1.1/SCN1A, Nav1.2/SCN2A, Nav1.3/SCN3A, Nav1.4/SCN4A, Nav1.5/SCN5A, Nav1.6/SCN8A, Nav1.7/SCN9A) (IC(50)=7.4-14 uM), and potassium channels Kv11.1/KCNH2 and Kv11.2/KCNH6 (IC(50)=11 uM for both) (PubMed:19955179, PubMed:29703751). It exhibits antimicrobial activities against the Gram-positive bacteria B.subtilis (MIC=0.5 uM), S.aureus (MIC=2-4 uM), and S.epidermidis (MIC=4-8 uM), and Gram-negative bacteria S.typhimurium (MIC=32.64 uM), P.aeruginosa (MIC=8-16 uM), and E.coli (MIC=8-16 uM).</text>
</comment>
<comment type="subcellular location">
    <subcellularLocation>
        <location evidence="2">Secreted</location>
    </subcellularLocation>
</comment>
<comment type="tissue specificity">
    <text evidence="28">Expressed by the venom gland.</text>
</comment>
<comment type="domain">
    <text evidence="13">The presence of a 'disulfide through disulfide knot' structurally defines this protein as a knottin.</text>
</comment>
<comment type="mass spectrometry" mass="4093.9" method="MALDI" evidence="2"/>
<comment type="mass spectrometry" mass="4092.96" method="Unknown" evidence="4"/>
<comment type="miscellaneous">
    <text evidence="11">Negative results: this toxin does not inhibit potassium channels Kv1.1/KCNA1, Kv1.4/KCNA4 and Kv11.3/KCNH7 (IC(50)=53-&gt;85 uM) (PubMed:19955179).</text>
</comment>
<comment type="similarity">
    <text evidence="27">Belongs to the neurotoxin 10 (Hwtx-1) family. 52 (MTx4) subfamily.</text>
</comment>